<protein>
    <recommendedName>
        <fullName>Uncharacterized protein YqzI</fullName>
    </recommendedName>
</protein>
<proteinExistence type="predicted"/>
<reference key="1">
    <citation type="journal article" date="1997" name="Nature">
        <title>The complete genome sequence of the Gram-positive bacterium Bacillus subtilis.</title>
        <authorList>
            <person name="Kunst F."/>
            <person name="Ogasawara N."/>
            <person name="Moszer I."/>
            <person name="Albertini A.M."/>
            <person name="Alloni G."/>
            <person name="Azevedo V."/>
            <person name="Bertero M.G."/>
            <person name="Bessieres P."/>
            <person name="Bolotin A."/>
            <person name="Borchert S."/>
            <person name="Borriss R."/>
            <person name="Boursier L."/>
            <person name="Brans A."/>
            <person name="Braun M."/>
            <person name="Brignell S.C."/>
            <person name="Bron S."/>
            <person name="Brouillet S."/>
            <person name="Bruschi C.V."/>
            <person name="Caldwell B."/>
            <person name="Capuano V."/>
            <person name="Carter N.M."/>
            <person name="Choi S.-K."/>
            <person name="Codani J.-J."/>
            <person name="Connerton I.F."/>
            <person name="Cummings N.J."/>
            <person name="Daniel R.A."/>
            <person name="Denizot F."/>
            <person name="Devine K.M."/>
            <person name="Duesterhoeft A."/>
            <person name="Ehrlich S.D."/>
            <person name="Emmerson P.T."/>
            <person name="Entian K.-D."/>
            <person name="Errington J."/>
            <person name="Fabret C."/>
            <person name="Ferrari E."/>
            <person name="Foulger D."/>
            <person name="Fritz C."/>
            <person name="Fujita M."/>
            <person name="Fujita Y."/>
            <person name="Fuma S."/>
            <person name="Galizzi A."/>
            <person name="Galleron N."/>
            <person name="Ghim S.-Y."/>
            <person name="Glaser P."/>
            <person name="Goffeau A."/>
            <person name="Golightly E.J."/>
            <person name="Grandi G."/>
            <person name="Guiseppi G."/>
            <person name="Guy B.J."/>
            <person name="Haga K."/>
            <person name="Haiech J."/>
            <person name="Harwood C.R."/>
            <person name="Henaut A."/>
            <person name="Hilbert H."/>
            <person name="Holsappel S."/>
            <person name="Hosono S."/>
            <person name="Hullo M.-F."/>
            <person name="Itaya M."/>
            <person name="Jones L.-M."/>
            <person name="Joris B."/>
            <person name="Karamata D."/>
            <person name="Kasahara Y."/>
            <person name="Klaerr-Blanchard M."/>
            <person name="Klein C."/>
            <person name="Kobayashi Y."/>
            <person name="Koetter P."/>
            <person name="Koningstein G."/>
            <person name="Krogh S."/>
            <person name="Kumano M."/>
            <person name="Kurita K."/>
            <person name="Lapidus A."/>
            <person name="Lardinois S."/>
            <person name="Lauber J."/>
            <person name="Lazarevic V."/>
            <person name="Lee S.-M."/>
            <person name="Levine A."/>
            <person name="Liu H."/>
            <person name="Masuda S."/>
            <person name="Mauel C."/>
            <person name="Medigue C."/>
            <person name="Medina N."/>
            <person name="Mellado R.P."/>
            <person name="Mizuno M."/>
            <person name="Moestl D."/>
            <person name="Nakai S."/>
            <person name="Noback M."/>
            <person name="Noone D."/>
            <person name="O'Reilly M."/>
            <person name="Ogawa K."/>
            <person name="Ogiwara A."/>
            <person name="Oudega B."/>
            <person name="Park S.-H."/>
            <person name="Parro V."/>
            <person name="Pohl T.M."/>
            <person name="Portetelle D."/>
            <person name="Porwollik S."/>
            <person name="Prescott A.M."/>
            <person name="Presecan E."/>
            <person name="Pujic P."/>
            <person name="Purnelle B."/>
            <person name="Rapoport G."/>
            <person name="Rey M."/>
            <person name="Reynolds S."/>
            <person name="Rieger M."/>
            <person name="Rivolta C."/>
            <person name="Rocha E."/>
            <person name="Roche B."/>
            <person name="Rose M."/>
            <person name="Sadaie Y."/>
            <person name="Sato T."/>
            <person name="Scanlan E."/>
            <person name="Schleich S."/>
            <person name="Schroeter R."/>
            <person name="Scoffone F."/>
            <person name="Sekiguchi J."/>
            <person name="Sekowska A."/>
            <person name="Seror S.J."/>
            <person name="Serror P."/>
            <person name="Shin B.-S."/>
            <person name="Soldo B."/>
            <person name="Sorokin A."/>
            <person name="Tacconi E."/>
            <person name="Takagi T."/>
            <person name="Takahashi H."/>
            <person name="Takemaru K."/>
            <person name="Takeuchi M."/>
            <person name="Tamakoshi A."/>
            <person name="Tanaka T."/>
            <person name="Terpstra P."/>
            <person name="Tognoni A."/>
            <person name="Tosato V."/>
            <person name="Uchiyama S."/>
            <person name="Vandenbol M."/>
            <person name="Vannier F."/>
            <person name="Vassarotti A."/>
            <person name="Viari A."/>
            <person name="Wambutt R."/>
            <person name="Wedler E."/>
            <person name="Wedler H."/>
            <person name="Weitzenegger T."/>
            <person name="Winters P."/>
            <person name="Wipat A."/>
            <person name="Yamamoto H."/>
            <person name="Yamane K."/>
            <person name="Yasumoto K."/>
            <person name="Yata K."/>
            <person name="Yoshida K."/>
            <person name="Yoshikawa H.-F."/>
            <person name="Zumstein E."/>
            <person name="Yoshikawa H."/>
            <person name="Danchin A."/>
        </authorList>
    </citation>
    <scope>NUCLEOTIDE SEQUENCE [LARGE SCALE GENOMIC DNA]</scope>
    <source>
        <strain>168</strain>
    </source>
</reference>
<dbReference type="EMBL" id="AL009126">
    <property type="protein sequence ID" value="CAB14526.1"/>
    <property type="molecule type" value="Genomic_DNA"/>
</dbReference>
<dbReference type="PIR" id="H69969">
    <property type="entry name" value="H69969"/>
</dbReference>
<dbReference type="RefSeq" id="NP_390462.1">
    <property type="nucleotide sequence ID" value="NC_000964.3"/>
</dbReference>
<dbReference type="RefSeq" id="WP_003245945.1">
    <property type="nucleotide sequence ID" value="NZ_OZ025638.1"/>
</dbReference>
<dbReference type="SMR" id="O32026"/>
<dbReference type="FunCoup" id="O32026">
    <property type="interactions" value="22"/>
</dbReference>
<dbReference type="STRING" id="224308.BSU25850"/>
<dbReference type="PaxDb" id="224308-BSU25850"/>
<dbReference type="EnsemblBacteria" id="CAB14526">
    <property type="protein sequence ID" value="CAB14526"/>
    <property type="gene ID" value="BSU_25850"/>
</dbReference>
<dbReference type="GeneID" id="937791"/>
<dbReference type="KEGG" id="bsu:BSU25850"/>
<dbReference type="PATRIC" id="fig|224308.179.peg.2809"/>
<dbReference type="InParanoid" id="O32026"/>
<dbReference type="OrthoDB" id="6565706at2"/>
<dbReference type="BioCyc" id="BSUB:BSU25850-MONOMER"/>
<dbReference type="Proteomes" id="UP000001570">
    <property type="component" value="Chromosome"/>
</dbReference>
<sequence length="52" mass="5893">MDLFDECLEALGKNKEILSEELTAKYYELLSNSFPLHLGDESSGKKFVVINL</sequence>
<feature type="chain" id="PRO_0000049854" description="Uncharacterized protein YqzI">
    <location>
        <begin position="1"/>
        <end position="52"/>
    </location>
</feature>
<gene>
    <name type="primary">yqzI</name>
    <name type="ordered locus">BSU25850</name>
</gene>
<keyword id="KW-1185">Reference proteome</keyword>
<accession>O32026</accession>
<organism>
    <name type="scientific">Bacillus subtilis (strain 168)</name>
    <dbReference type="NCBI Taxonomy" id="224308"/>
    <lineage>
        <taxon>Bacteria</taxon>
        <taxon>Bacillati</taxon>
        <taxon>Bacillota</taxon>
        <taxon>Bacilli</taxon>
        <taxon>Bacillales</taxon>
        <taxon>Bacillaceae</taxon>
        <taxon>Bacillus</taxon>
    </lineage>
</organism>
<name>YQZI_BACSU</name>